<feature type="chain" id="PRO_0000238415" description="ATP synthase subunit alpha, chloroplastic">
    <location>
        <begin position="1"/>
        <end position="507"/>
    </location>
</feature>
<feature type="binding site" evidence="1">
    <location>
        <begin position="170"/>
        <end position="177"/>
    </location>
    <ligand>
        <name>ATP</name>
        <dbReference type="ChEBI" id="CHEBI:30616"/>
    </ligand>
</feature>
<feature type="site" description="Required for activity" evidence="1">
    <location>
        <position position="363"/>
    </location>
</feature>
<accession>Q8S8Y3</accession>
<organism>
    <name type="scientific">Atropa belladonna</name>
    <name type="common">Belladonna</name>
    <name type="synonym">Deadly nightshade</name>
    <dbReference type="NCBI Taxonomy" id="33113"/>
    <lineage>
        <taxon>Eukaryota</taxon>
        <taxon>Viridiplantae</taxon>
        <taxon>Streptophyta</taxon>
        <taxon>Embryophyta</taxon>
        <taxon>Tracheophyta</taxon>
        <taxon>Spermatophyta</taxon>
        <taxon>Magnoliopsida</taxon>
        <taxon>eudicotyledons</taxon>
        <taxon>Gunneridae</taxon>
        <taxon>Pentapetalae</taxon>
        <taxon>asterids</taxon>
        <taxon>lamiids</taxon>
        <taxon>Solanales</taxon>
        <taxon>Solanaceae</taxon>
        <taxon>Solanoideae</taxon>
        <taxon>Hyoscyameae</taxon>
        <taxon>Atropa</taxon>
    </lineage>
</organism>
<sequence length="507" mass="55453">MVTIRADEISNIIRERIEQYNREVKIVNTGTVLQVGDGIARIHGLDEVMAGELVEFEEGTIGIALNLESNNVGVVLMGDGLLIQEGSSVKATGRIAQIPVSEAYLGRVVNALAKPIDGRGEISASEFRLIESAAPGIISRRSVYEPLQTGLIAIDSMIPIGRGQRELIIGDRQTGKTAVATDTILNQQGQNVICVYVAIGQKASSVAQVVTTLQERGAMEYTIVVAETADSPATLQYLAPYTGASLAEYFMYRERHTLIIYDDLSKQAQAYRQMSLLLRRPPGREAYPGDVFYLHSRLLERAAKLSSSLGEGSMTALPIVETQSGDVSAYIPTNVISITDGQIFLSADLFNSGIRPAINVGISVSRVGSAAQIKAMKQVAGKLKLELAQFAELEAFAQFASDLDKATQNQLARGQRLRELLKQSQSAPLTVEEQIMTIYTGTNGYLDSLEVGQVRKFLVELRTYLKTNKPQFQEIISSTKTFTEEAEALLKEAIQEQMKRFILQEQA</sequence>
<gene>
    <name evidence="1" type="primary">atpA</name>
</gene>
<name>ATPA_ATRBE</name>
<reference key="1">
    <citation type="journal article" date="2002" name="Mol. Biol. Evol.">
        <title>The plastid chromosome of Atropa belladonna and its comparison with that of Nicotiana tabacum: the role of RNA editing in generating divergence in the process of plant speciation.</title>
        <authorList>
            <person name="Schmitz-Linneweber C."/>
            <person name="Regel R."/>
            <person name="Du T.G."/>
            <person name="Hupfer H."/>
            <person name="Herrmann R.G."/>
            <person name="Maier R.M."/>
        </authorList>
    </citation>
    <scope>NUCLEOTIDE SEQUENCE [LARGE SCALE GENOMIC DNA]</scope>
    <source>
        <strain>cv. Ab5p(kan)</strain>
    </source>
</reference>
<evidence type="ECO:0000255" key="1">
    <source>
        <dbReference type="HAMAP-Rule" id="MF_01346"/>
    </source>
</evidence>
<geneLocation type="chloroplast"/>
<keyword id="KW-0066">ATP synthesis</keyword>
<keyword id="KW-0067">ATP-binding</keyword>
<keyword id="KW-0139">CF(1)</keyword>
<keyword id="KW-0150">Chloroplast</keyword>
<keyword id="KW-0375">Hydrogen ion transport</keyword>
<keyword id="KW-0406">Ion transport</keyword>
<keyword id="KW-0472">Membrane</keyword>
<keyword id="KW-0547">Nucleotide-binding</keyword>
<keyword id="KW-0934">Plastid</keyword>
<keyword id="KW-0793">Thylakoid</keyword>
<keyword id="KW-1278">Translocase</keyword>
<keyword id="KW-0813">Transport</keyword>
<comment type="function">
    <text evidence="1">Produces ATP from ADP in the presence of a proton gradient across the membrane. The alpha chain is a regulatory subunit.</text>
</comment>
<comment type="catalytic activity">
    <reaction evidence="1">
        <text>ATP + H2O + 4 H(+)(in) = ADP + phosphate + 5 H(+)(out)</text>
        <dbReference type="Rhea" id="RHEA:57720"/>
        <dbReference type="ChEBI" id="CHEBI:15377"/>
        <dbReference type="ChEBI" id="CHEBI:15378"/>
        <dbReference type="ChEBI" id="CHEBI:30616"/>
        <dbReference type="ChEBI" id="CHEBI:43474"/>
        <dbReference type="ChEBI" id="CHEBI:456216"/>
        <dbReference type="EC" id="7.1.2.2"/>
    </reaction>
</comment>
<comment type="subunit">
    <text evidence="1">F-type ATPases have 2 components, CF(1) - the catalytic core - and CF(0) - the membrane proton channel. CF(1) has five subunits: alpha(3), beta(3), gamma(1), delta(1), epsilon(1). CF(0) has four main subunits: a, b, b' and c.</text>
</comment>
<comment type="subcellular location">
    <subcellularLocation>
        <location evidence="1">Plastid</location>
        <location evidence="1">Chloroplast thylakoid membrane</location>
        <topology evidence="1">Peripheral membrane protein</topology>
    </subcellularLocation>
</comment>
<comment type="similarity">
    <text evidence="1">Belongs to the ATPase alpha/beta chains family.</text>
</comment>
<dbReference type="EC" id="7.1.2.2" evidence="1"/>
<dbReference type="EMBL" id="AJ316582">
    <property type="protein sequence ID" value="CAC88029.1"/>
    <property type="molecule type" value="Genomic_DNA"/>
</dbReference>
<dbReference type="RefSeq" id="NP_783217.1">
    <property type="nucleotide sequence ID" value="NC_004561.1"/>
</dbReference>
<dbReference type="SMR" id="Q8S8Y3"/>
<dbReference type="GeneID" id="806505"/>
<dbReference type="GO" id="GO:0009535">
    <property type="term" value="C:chloroplast thylakoid membrane"/>
    <property type="evidence" value="ECO:0007669"/>
    <property type="project" value="UniProtKB-SubCell"/>
</dbReference>
<dbReference type="GO" id="GO:0045259">
    <property type="term" value="C:proton-transporting ATP synthase complex"/>
    <property type="evidence" value="ECO:0007669"/>
    <property type="project" value="UniProtKB-KW"/>
</dbReference>
<dbReference type="GO" id="GO:0043531">
    <property type="term" value="F:ADP binding"/>
    <property type="evidence" value="ECO:0007669"/>
    <property type="project" value="TreeGrafter"/>
</dbReference>
<dbReference type="GO" id="GO:0005524">
    <property type="term" value="F:ATP binding"/>
    <property type="evidence" value="ECO:0007669"/>
    <property type="project" value="UniProtKB-UniRule"/>
</dbReference>
<dbReference type="GO" id="GO:0046933">
    <property type="term" value="F:proton-transporting ATP synthase activity, rotational mechanism"/>
    <property type="evidence" value="ECO:0007669"/>
    <property type="project" value="UniProtKB-UniRule"/>
</dbReference>
<dbReference type="CDD" id="cd18113">
    <property type="entry name" value="ATP-synt_F1_alpha_C"/>
    <property type="match status" value="1"/>
</dbReference>
<dbReference type="CDD" id="cd18116">
    <property type="entry name" value="ATP-synt_F1_alpha_N"/>
    <property type="match status" value="1"/>
</dbReference>
<dbReference type="CDD" id="cd01132">
    <property type="entry name" value="F1-ATPase_alpha_CD"/>
    <property type="match status" value="1"/>
</dbReference>
<dbReference type="FunFam" id="1.20.150.20:FF:000001">
    <property type="entry name" value="ATP synthase subunit alpha"/>
    <property type="match status" value="1"/>
</dbReference>
<dbReference type="FunFam" id="2.40.30.20:FF:000001">
    <property type="entry name" value="ATP synthase subunit alpha"/>
    <property type="match status" value="1"/>
</dbReference>
<dbReference type="FunFam" id="3.40.50.300:FF:000002">
    <property type="entry name" value="ATP synthase subunit alpha"/>
    <property type="match status" value="1"/>
</dbReference>
<dbReference type="Gene3D" id="2.40.30.20">
    <property type="match status" value="1"/>
</dbReference>
<dbReference type="Gene3D" id="1.20.150.20">
    <property type="entry name" value="ATP synthase alpha/beta chain, C-terminal domain"/>
    <property type="match status" value="1"/>
</dbReference>
<dbReference type="Gene3D" id="3.40.50.300">
    <property type="entry name" value="P-loop containing nucleotide triphosphate hydrolases"/>
    <property type="match status" value="1"/>
</dbReference>
<dbReference type="HAMAP" id="MF_01346">
    <property type="entry name" value="ATP_synth_alpha_bact"/>
    <property type="match status" value="1"/>
</dbReference>
<dbReference type="InterPro" id="IPR023366">
    <property type="entry name" value="ATP_synth_asu-like_sf"/>
</dbReference>
<dbReference type="InterPro" id="IPR000793">
    <property type="entry name" value="ATP_synth_asu_C"/>
</dbReference>
<dbReference type="InterPro" id="IPR038376">
    <property type="entry name" value="ATP_synth_asu_C_sf"/>
</dbReference>
<dbReference type="InterPro" id="IPR033732">
    <property type="entry name" value="ATP_synth_F1_a_nt-bd_dom"/>
</dbReference>
<dbReference type="InterPro" id="IPR005294">
    <property type="entry name" value="ATP_synth_F1_asu"/>
</dbReference>
<dbReference type="InterPro" id="IPR020003">
    <property type="entry name" value="ATPase_a/bsu_AS"/>
</dbReference>
<dbReference type="InterPro" id="IPR004100">
    <property type="entry name" value="ATPase_F1/V1/A1_a/bsu_N"/>
</dbReference>
<dbReference type="InterPro" id="IPR036121">
    <property type="entry name" value="ATPase_F1/V1/A1_a/bsu_N_sf"/>
</dbReference>
<dbReference type="InterPro" id="IPR000194">
    <property type="entry name" value="ATPase_F1/V1/A1_a/bsu_nucl-bd"/>
</dbReference>
<dbReference type="InterPro" id="IPR027417">
    <property type="entry name" value="P-loop_NTPase"/>
</dbReference>
<dbReference type="NCBIfam" id="TIGR00962">
    <property type="entry name" value="atpA"/>
    <property type="match status" value="1"/>
</dbReference>
<dbReference type="NCBIfam" id="NF009884">
    <property type="entry name" value="PRK13343.1"/>
    <property type="match status" value="1"/>
</dbReference>
<dbReference type="PANTHER" id="PTHR48082">
    <property type="entry name" value="ATP SYNTHASE SUBUNIT ALPHA, MITOCHONDRIAL"/>
    <property type="match status" value="1"/>
</dbReference>
<dbReference type="PANTHER" id="PTHR48082:SF2">
    <property type="entry name" value="ATP SYNTHASE SUBUNIT ALPHA, MITOCHONDRIAL"/>
    <property type="match status" value="1"/>
</dbReference>
<dbReference type="Pfam" id="PF00006">
    <property type="entry name" value="ATP-synt_ab"/>
    <property type="match status" value="1"/>
</dbReference>
<dbReference type="Pfam" id="PF00306">
    <property type="entry name" value="ATP-synt_ab_C"/>
    <property type="match status" value="1"/>
</dbReference>
<dbReference type="Pfam" id="PF02874">
    <property type="entry name" value="ATP-synt_ab_N"/>
    <property type="match status" value="1"/>
</dbReference>
<dbReference type="PIRSF" id="PIRSF039088">
    <property type="entry name" value="F_ATPase_subunit_alpha"/>
    <property type="match status" value="1"/>
</dbReference>
<dbReference type="SUPFAM" id="SSF47917">
    <property type="entry name" value="C-terminal domain of alpha and beta subunits of F1 ATP synthase"/>
    <property type="match status" value="1"/>
</dbReference>
<dbReference type="SUPFAM" id="SSF50615">
    <property type="entry name" value="N-terminal domain of alpha and beta subunits of F1 ATP synthase"/>
    <property type="match status" value="1"/>
</dbReference>
<dbReference type="SUPFAM" id="SSF52540">
    <property type="entry name" value="P-loop containing nucleoside triphosphate hydrolases"/>
    <property type="match status" value="1"/>
</dbReference>
<dbReference type="PROSITE" id="PS00152">
    <property type="entry name" value="ATPASE_ALPHA_BETA"/>
    <property type="match status" value="1"/>
</dbReference>
<protein>
    <recommendedName>
        <fullName evidence="1">ATP synthase subunit alpha, chloroplastic</fullName>
        <ecNumber evidence="1">7.1.2.2</ecNumber>
    </recommendedName>
    <alternativeName>
        <fullName evidence="1">ATP synthase F1 sector subunit alpha</fullName>
    </alternativeName>
    <alternativeName>
        <fullName evidence="1">F-ATPase subunit alpha</fullName>
    </alternativeName>
</protein>
<proteinExistence type="inferred from homology"/>